<sequence length="150" mass="16281">MRIWIDADACPKAAKDLIVKFALKRKLEVVMVAGQAVAKPAFAVVRLIVVPSGMDAADDYLVEHAVPGELVICSDVPLADRLIKKGVAALDPRGREFDERNMGDRLAVRNLFTELREQGQAGGGQGPYGEREKQAFANALDRILARLAKG</sequence>
<name>Y5044_PSEPW</name>
<dbReference type="EMBL" id="CP000949">
    <property type="protein sequence ID" value="ACA75520.1"/>
    <property type="molecule type" value="Genomic_DNA"/>
</dbReference>
<dbReference type="SMR" id="B1JFD6"/>
<dbReference type="STRING" id="390235.PputW619_5044"/>
<dbReference type="KEGG" id="ppw:PputW619_5044"/>
<dbReference type="eggNOG" id="COG1671">
    <property type="taxonomic scope" value="Bacteria"/>
</dbReference>
<dbReference type="HOGENOM" id="CLU_106619_2_1_6"/>
<dbReference type="OrthoDB" id="9798918at2"/>
<dbReference type="CDD" id="cd18720">
    <property type="entry name" value="PIN_YqxD-like"/>
    <property type="match status" value="1"/>
</dbReference>
<dbReference type="HAMAP" id="MF_00489">
    <property type="entry name" value="UPF0178"/>
    <property type="match status" value="1"/>
</dbReference>
<dbReference type="InterPro" id="IPR003791">
    <property type="entry name" value="UPF0178"/>
</dbReference>
<dbReference type="NCBIfam" id="NF001095">
    <property type="entry name" value="PRK00124.1"/>
    <property type="match status" value="1"/>
</dbReference>
<dbReference type="PANTHER" id="PTHR35146">
    <property type="entry name" value="UPF0178 PROTEIN YAII"/>
    <property type="match status" value="1"/>
</dbReference>
<dbReference type="PANTHER" id="PTHR35146:SF1">
    <property type="entry name" value="UPF0178 PROTEIN YAII"/>
    <property type="match status" value="1"/>
</dbReference>
<dbReference type="Pfam" id="PF02639">
    <property type="entry name" value="DUF188"/>
    <property type="match status" value="1"/>
</dbReference>
<organism>
    <name type="scientific">Pseudomonas putida (strain W619)</name>
    <dbReference type="NCBI Taxonomy" id="390235"/>
    <lineage>
        <taxon>Bacteria</taxon>
        <taxon>Pseudomonadati</taxon>
        <taxon>Pseudomonadota</taxon>
        <taxon>Gammaproteobacteria</taxon>
        <taxon>Pseudomonadales</taxon>
        <taxon>Pseudomonadaceae</taxon>
        <taxon>Pseudomonas</taxon>
    </lineage>
</organism>
<evidence type="ECO:0000255" key="1">
    <source>
        <dbReference type="HAMAP-Rule" id="MF_00489"/>
    </source>
</evidence>
<comment type="similarity">
    <text evidence="1">Belongs to the UPF0178 family.</text>
</comment>
<gene>
    <name type="ordered locus">PputW619_5044</name>
</gene>
<accession>B1JFD6</accession>
<proteinExistence type="inferred from homology"/>
<feature type="chain" id="PRO_1000126204" description="UPF0178 protein PputW619_5044">
    <location>
        <begin position="1"/>
        <end position="150"/>
    </location>
</feature>
<protein>
    <recommendedName>
        <fullName evidence="1">UPF0178 protein PputW619_5044</fullName>
    </recommendedName>
</protein>
<reference key="1">
    <citation type="submission" date="2008-02" db="EMBL/GenBank/DDBJ databases">
        <title>Complete sequence of Pseudomonas putida W619.</title>
        <authorList>
            <person name="Copeland A."/>
            <person name="Lucas S."/>
            <person name="Lapidus A."/>
            <person name="Barry K."/>
            <person name="Detter J.C."/>
            <person name="Glavina del Rio T."/>
            <person name="Dalin E."/>
            <person name="Tice H."/>
            <person name="Pitluck S."/>
            <person name="Chain P."/>
            <person name="Malfatti S."/>
            <person name="Shin M."/>
            <person name="Vergez L."/>
            <person name="Schmutz J."/>
            <person name="Larimer F."/>
            <person name="Land M."/>
            <person name="Hauser L."/>
            <person name="Kyrpides N."/>
            <person name="Kim E."/>
            <person name="Taghavi S."/>
            <person name="Vangronsveld D."/>
            <person name="van der Lelie D."/>
            <person name="Richardson P."/>
        </authorList>
    </citation>
    <scope>NUCLEOTIDE SEQUENCE [LARGE SCALE GENOMIC DNA]</scope>
    <source>
        <strain>W619</strain>
    </source>
</reference>